<feature type="transit peptide" description="Mitochondrion" evidence="1">
    <location>
        <begin position="1"/>
        <end position="52"/>
    </location>
</feature>
<feature type="chain" id="PRO_0000245093" description="Presenilin-associated rhomboid-like protein, mitochondrial">
    <location>
        <begin position="53"/>
        <end position="377"/>
    </location>
</feature>
<feature type="peptide" id="PRO_0000245094" description="P-beta" evidence="1">
    <location>
        <begin position="53"/>
        <end position="75"/>
    </location>
</feature>
<feature type="topological domain" description="Mitochondrial matrix" evidence="4">
    <location>
        <begin position="53"/>
        <end position="99"/>
    </location>
</feature>
<feature type="transmembrane region" description="Helical" evidence="4">
    <location>
        <begin position="100"/>
        <end position="119"/>
    </location>
</feature>
<feature type="topological domain" description="Mitochondrial intermembrane" evidence="4">
    <location>
        <begin position="120"/>
        <end position="165"/>
    </location>
</feature>
<feature type="transmembrane region" description="Helical" evidence="4">
    <location>
        <begin position="166"/>
        <end position="185"/>
    </location>
</feature>
<feature type="topological domain" description="Mitochondrial matrix" evidence="4">
    <location>
        <begin position="186"/>
        <end position="205"/>
    </location>
</feature>
<feature type="transmembrane region" description="Helical" evidence="4">
    <location>
        <begin position="206"/>
        <end position="228"/>
    </location>
</feature>
<feature type="topological domain" description="Mitochondrial intermembrane" evidence="4">
    <location>
        <begin position="229"/>
        <end position="242"/>
    </location>
</feature>
<feature type="transmembrane region" description="Helical" evidence="4">
    <location>
        <begin position="243"/>
        <end position="260"/>
    </location>
</feature>
<feature type="topological domain" description="Mitochondrial matrix" evidence="4">
    <location>
        <begin position="261"/>
        <end position="270"/>
    </location>
</feature>
<feature type="transmembrane region" description="Helical" evidence="4">
    <location>
        <begin position="271"/>
        <end position="287"/>
    </location>
</feature>
<feature type="topological domain" description="Mitochondrial intermembrane" evidence="4">
    <location>
        <begin position="288"/>
        <end position="293"/>
    </location>
</feature>
<feature type="transmembrane region" description="Helical" evidence="4">
    <location>
        <begin position="294"/>
        <end position="316"/>
    </location>
</feature>
<feature type="topological domain" description="Mitochondrial matrix" evidence="4">
    <location>
        <begin position="317"/>
        <end position="330"/>
    </location>
</feature>
<feature type="transmembrane region" description="Helical" evidence="4">
    <location>
        <begin position="331"/>
        <end position="352"/>
    </location>
</feature>
<feature type="topological domain" description="Mitochondrial intermembrane" evidence="4">
    <location>
        <begin position="353"/>
        <end position="377"/>
    </location>
</feature>
<feature type="active site" description="Nucleophile" evidence="1">
    <location>
        <position position="275"/>
    </location>
</feature>
<feature type="active site" evidence="1">
    <location>
        <position position="333"/>
    </location>
</feature>
<feature type="modified residue" description="Phosphoserine" evidence="3">
    <location>
        <position position="65"/>
    </location>
</feature>
<feature type="modified residue" description="Phosphoserine" evidence="3">
    <location>
        <position position="68"/>
    </location>
</feature>
<feature type="sequence conflict" description="In Ref. 1; AAX08693." evidence="5" ref="1">
    <original>R</original>
    <variation>G</variation>
    <location>
        <position position="4"/>
    </location>
</feature>
<name>PARL_BOVIN</name>
<reference key="1">
    <citation type="journal article" date="2005" name="BMC Genomics">
        <title>Characterization of 954 bovine full-CDS cDNA sequences.</title>
        <authorList>
            <person name="Harhay G.P."/>
            <person name="Sonstegard T.S."/>
            <person name="Keele J.W."/>
            <person name="Heaton M.P."/>
            <person name="Clawson M.L."/>
            <person name="Snelling W.M."/>
            <person name="Wiedmann R.T."/>
            <person name="Van Tassell C.P."/>
            <person name="Smith T.P.L."/>
        </authorList>
    </citation>
    <scope>NUCLEOTIDE SEQUENCE [LARGE SCALE MRNA]</scope>
</reference>
<reference key="2">
    <citation type="submission" date="2006-01" db="EMBL/GenBank/DDBJ databases">
        <authorList>
            <consortium name="NIH - Mammalian Gene Collection (MGC) project"/>
        </authorList>
    </citation>
    <scope>NUCLEOTIDE SEQUENCE [LARGE SCALE MRNA]</scope>
    <source>
        <strain>Hereford</strain>
        <tissue>Hypothalamus</tissue>
    </source>
</reference>
<proteinExistence type="evidence at transcript level"/>
<gene>
    <name type="primary">PARL</name>
    <name type="synonym">PSARL</name>
</gene>
<accession>Q2KHV4</accession>
<accession>A1L5A2</accession>
<accession>Q0V8C8</accession>
<accession>Q5EA93</accession>
<comment type="function">
    <text evidence="2 3">Required for the control of apoptosis during postnatal growth. Essential for proteolytic processing of an antiapoptotic form of OPA1 which prevents the release of mitochondrial cytochrome c in response to intrinsic apoptotic signals. Required for the maturation of PINK1 into its 52kDa mature form after its cleavage by mitochondrial-processing peptidase (MPP). Promotes cleavage of serine/threonine-protein phosphatase PGAM5 in damaged mitochondria in response to loss of mitochondrial membrane potential. Mediates differential cleavage of PINK1 and PGAM5 depending on the health status of mitochondria, disassociating from PINK1 and associating with PGAM5 in response to mitochondrial membrane potential loss. Required for processing of CLPB into a form with higher protein disaggregase activity by removing an autoinhibitory N-terminal peptide. Promotes processing of DIABLO/SMAC in the mitochondrion which is required for DIABLO apoptotic activity. Also required for cleavage of STARD7 and TTC19. Promotes changes in mitochondria morphology regulated by phosphorylation of P-beta domain.</text>
</comment>
<comment type="catalytic activity">
    <reaction evidence="3">
        <text>Cleaves type-1 transmembrane domains using a catalytic dyad composed of serine and histidine that are contributed by different transmembrane domains.</text>
        <dbReference type="EC" id="3.4.21.105"/>
    </reaction>
</comment>
<comment type="subunit">
    <text evidence="1">Interacts with PSEN1 and PSEN2. Binds OPA1 (By similarity).</text>
</comment>
<comment type="subcellular location">
    <subcellularLocation>
        <location evidence="3">Mitochondrion inner membrane</location>
        <topology evidence="3">Multi-pass membrane protein</topology>
    </subcellularLocation>
</comment>
<comment type="subcellular location">
    <molecule>P-beta</molecule>
    <subcellularLocation>
        <location evidence="3">Nucleus</location>
    </subcellularLocation>
    <text evidence="3">Translocated into the nucleus by an unknown mechanism.</text>
</comment>
<comment type="PTM">
    <text evidence="1">P-beta is proteolytically processed (beta-cleavage) in a PARL-dependent manner.</text>
</comment>
<comment type="similarity">
    <text evidence="5">Belongs to the peptidase S54 family.</text>
</comment>
<keyword id="KW-0378">Hydrolase</keyword>
<keyword id="KW-0472">Membrane</keyword>
<keyword id="KW-0496">Mitochondrion</keyword>
<keyword id="KW-0999">Mitochondrion inner membrane</keyword>
<keyword id="KW-0539">Nucleus</keyword>
<keyword id="KW-0597">Phosphoprotein</keyword>
<keyword id="KW-0645">Protease</keyword>
<keyword id="KW-1185">Reference proteome</keyword>
<keyword id="KW-0720">Serine protease</keyword>
<keyword id="KW-0809">Transit peptide</keyword>
<keyword id="KW-0812">Transmembrane</keyword>
<keyword id="KW-1133">Transmembrane helix</keyword>
<sequence length="377" mass="42301">MAWRGWAQRGWGCGQAWTLPVCGGSYEELTAALAPSRLLRRRFNFFIQQKCGFRKAPRKVEPRRSDTSSEAYKRSALIPPVEETAFYPSPYPIRTLVKPLFFTVGFTGCAFGSAAIWQYESLKSKVQSYFDGIKADWLDSIRPQKEGDFRKEINKWWNNLSDGQRTVTGIIAANVFVFCLWRVPSLQRTMIRYFTSNPASKVLCSPMLLSTFSHFSLFHMAANMYVLWSFSSSIVNILGQEQFMAVYLSAGVISTFVSYVCKVATGRYGPSLGASGAIMTVLAAVCTKIPEGRLAIIFLPMFTFTAGNALKAIIAMDTAGMILGWKFFDHAAHLGGALFGIWYITYGHELIWKNREPLVKIWHEMRTNSPKKGGGSK</sequence>
<dbReference type="EC" id="3.4.21.105" evidence="3"/>
<dbReference type="EMBL" id="BT020676">
    <property type="protein sequence ID" value="AAX08693.1"/>
    <property type="molecule type" value="mRNA"/>
</dbReference>
<dbReference type="EMBL" id="BT026291">
    <property type="protein sequence ID" value="ABG81447.1"/>
    <property type="molecule type" value="mRNA"/>
</dbReference>
<dbReference type="EMBL" id="BT029889">
    <property type="protein sequence ID" value="ABM06139.1"/>
    <property type="molecule type" value="mRNA"/>
</dbReference>
<dbReference type="EMBL" id="BC112869">
    <property type="protein sequence ID" value="AAI12870.1"/>
    <property type="molecule type" value="mRNA"/>
</dbReference>
<dbReference type="RefSeq" id="NP_001015596.1">
    <property type="nucleotide sequence ID" value="NM_001015596.1"/>
</dbReference>
<dbReference type="SMR" id="Q2KHV4"/>
<dbReference type="FunCoup" id="Q2KHV4">
    <property type="interactions" value="3944"/>
</dbReference>
<dbReference type="STRING" id="9913.ENSBTAP00000019227"/>
<dbReference type="PaxDb" id="9913-ENSBTAP00000019227"/>
<dbReference type="GeneID" id="514191"/>
<dbReference type="KEGG" id="bta:514191"/>
<dbReference type="CTD" id="55486"/>
<dbReference type="eggNOG" id="KOG2980">
    <property type="taxonomic scope" value="Eukaryota"/>
</dbReference>
<dbReference type="HOGENOM" id="CLU_034022_0_1_1"/>
<dbReference type="InParanoid" id="Q2KHV4"/>
<dbReference type="OrthoDB" id="10260614at2759"/>
<dbReference type="TreeFam" id="TF313603"/>
<dbReference type="Proteomes" id="UP000009136">
    <property type="component" value="Unplaced"/>
</dbReference>
<dbReference type="GO" id="GO:0005743">
    <property type="term" value="C:mitochondrial inner membrane"/>
    <property type="evidence" value="ECO:0007669"/>
    <property type="project" value="UniProtKB-SubCell"/>
</dbReference>
<dbReference type="GO" id="GO:0005634">
    <property type="term" value="C:nucleus"/>
    <property type="evidence" value="ECO:0007669"/>
    <property type="project" value="UniProtKB-SubCell"/>
</dbReference>
<dbReference type="GO" id="GO:0004252">
    <property type="term" value="F:serine-type endopeptidase activity"/>
    <property type="evidence" value="ECO:0000250"/>
    <property type="project" value="UniProtKB"/>
</dbReference>
<dbReference type="GO" id="GO:0016485">
    <property type="term" value="P:protein processing"/>
    <property type="evidence" value="ECO:0000250"/>
    <property type="project" value="UniProtKB"/>
</dbReference>
<dbReference type="GO" id="GO:0006465">
    <property type="term" value="P:signal peptide processing"/>
    <property type="evidence" value="ECO:0000318"/>
    <property type="project" value="GO_Central"/>
</dbReference>
<dbReference type="FunFam" id="1.20.1540.10:FF:000005">
    <property type="entry name" value="Presenilins-associated rhomboid-like protein, mitochondrial"/>
    <property type="match status" value="1"/>
</dbReference>
<dbReference type="Gene3D" id="1.20.1540.10">
    <property type="entry name" value="Rhomboid-like"/>
    <property type="match status" value="1"/>
</dbReference>
<dbReference type="InterPro" id="IPR022764">
    <property type="entry name" value="Peptidase_S54_rhomboid_dom"/>
</dbReference>
<dbReference type="InterPro" id="IPR035952">
    <property type="entry name" value="Rhomboid-like_sf"/>
</dbReference>
<dbReference type="InterPro" id="IPR050925">
    <property type="entry name" value="Rhomboid_protease_S54"/>
</dbReference>
<dbReference type="PANTHER" id="PTHR43731:SF14">
    <property type="entry name" value="PRESENILIN-ASSOCIATED RHOMBOID-LIKE PROTEIN, MITOCHONDRIAL"/>
    <property type="match status" value="1"/>
</dbReference>
<dbReference type="PANTHER" id="PTHR43731">
    <property type="entry name" value="RHOMBOID PROTEASE"/>
    <property type="match status" value="1"/>
</dbReference>
<dbReference type="Pfam" id="PF01694">
    <property type="entry name" value="Rhomboid"/>
    <property type="match status" value="1"/>
</dbReference>
<dbReference type="SUPFAM" id="SSF144091">
    <property type="entry name" value="Rhomboid-like"/>
    <property type="match status" value="1"/>
</dbReference>
<organism>
    <name type="scientific">Bos taurus</name>
    <name type="common">Bovine</name>
    <dbReference type="NCBI Taxonomy" id="9913"/>
    <lineage>
        <taxon>Eukaryota</taxon>
        <taxon>Metazoa</taxon>
        <taxon>Chordata</taxon>
        <taxon>Craniata</taxon>
        <taxon>Vertebrata</taxon>
        <taxon>Euteleostomi</taxon>
        <taxon>Mammalia</taxon>
        <taxon>Eutheria</taxon>
        <taxon>Laurasiatheria</taxon>
        <taxon>Artiodactyla</taxon>
        <taxon>Ruminantia</taxon>
        <taxon>Pecora</taxon>
        <taxon>Bovidae</taxon>
        <taxon>Bovinae</taxon>
        <taxon>Bos</taxon>
    </lineage>
</organism>
<evidence type="ECO:0000250" key="1"/>
<evidence type="ECO:0000250" key="2">
    <source>
        <dbReference type="UniProtKB" id="Q5XJY4"/>
    </source>
</evidence>
<evidence type="ECO:0000250" key="3">
    <source>
        <dbReference type="UniProtKB" id="Q9H300"/>
    </source>
</evidence>
<evidence type="ECO:0000255" key="4"/>
<evidence type="ECO:0000305" key="5"/>
<protein>
    <recommendedName>
        <fullName>Presenilin-associated rhomboid-like protein, mitochondrial</fullName>
        <ecNumber evidence="3">3.4.21.105</ecNumber>
    </recommendedName>
    <alternativeName>
        <fullName>Mitochondrial intramembrane cleaving protease PARL</fullName>
    </alternativeName>
    <component>
        <recommendedName>
            <fullName>P-beta</fullName>
            <shortName>Pbeta</shortName>
        </recommendedName>
    </component>
</protein>